<dbReference type="EC" id="6.3.5.7" evidence="1"/>
<dbReference type="EMBL" id="AE016815">
    <property type="protein sequence ID" value="AAS50911.2"/>
    <property type="molecule type" value="Genomic_DNA"/>
</dbReference>
<dbReference type="RefSeq" id="NP_983087.2">
    <property type="nucleotide sequence ID" value="NM_208440.2"/>
</dbReference>
<dbReference type="SMR" id="Q75D84"/>
<dbReference type="FunCoup" id="Q75D84">
    <property type="interactions" value="351"/>
</dbReference>
<dbReference type="STRING" id="284811.Q75D84"/>
<dbReference type="EnsemblFungi" id="AAS50911">
    <property type="protein sequence ID" value="AAS50911"/>
    <property type="gene ID" value="AGOS_ABR140C"/>
</dbReference>
<dbReference type="GeneID" id="4619197"/>
<dbReference type="KEGG" id="ago:AGOS_ABR140C"/>
<dbReference type="eggNOG" id="KOG1211">
    <property type="taxonomic scope" value="Eukaryota"/>
</dbReference>
<dbReference type="HOGENOM" id="CLU_009600_7_6_1"/>
<dbReference type="InParanoid" id="Q75D84"/>
<dbReference type="OMA" id="QPASYCG"/>
<dbReference type="OrthoDB" id="421993at2759"/>
<dbReference type="Proteomes" id="UP000000591">
    <property type="component" value="Chromosome II"/>
</dbReference>
<dbReference type="GO" id="GO:0030956">
    <property type="term" value="C:glutamyl-tRNA(Gln) amidotransferase complex"/>
    <property type="evidence" value="ECO:0000318"/>
    <property type="project" value="GO_Central"/>
</dbReference>
<dbReference type="GO" id="GO:0005739">
    <property type="term" value="C:mitochondrion"/>
    <property type="evidence" value="ECO:0000318"/>
    <property type="project" value="GO_Central"/>
</dbReference>
<dbReference type="GO" id="GO:0005524">
    <property type="term" value="F:ATP binding"/>
    <property type="evidence" value="ECO:0007669"/>
    <property type="project" value="UniProtKB-KW"/>
</dbReference>
<dbReference type="GO" id="GO:0050567">
    <property type="term" value="F:glutaminyl-tRNA synthase (glutamine-hydrolyzing) activity"/>
    <property type="evidence" value="ECO:0000318"/>
    <property type="project" value="GO_Central"/>
</dbReference>
<dbReference type="GO" id="GO:0007029">
    <property type="term" value="P:endoplasmic reticulum organization"/>
    <property type="evidence" value="ECO:0007669"/>
    <property type="project" value="EnsemblFungi"/>
</dbReference>
<dbReference type="GO" id="GO:0070681">
    <property type="term" value="P:glutaminyl-tRNAGln biosynthesis via transamidation"/>
    <property type="evidence" value="ECO:0000318"/>
    <property type="project" value="GO_Central"/>
</dbReference>
<dbReference type="GO" id="GO:0032543">
    <property type="term" value="P:mitochondrial translation"/>
    <property type="evidence" value="ECO:0000318"/>
    <property type="project" value="GO_Central"/>
</dbReference>
<dbReference type="Gene3D" id="3.90.1300.10">
    <property type="entry name" value="Amidase signature (AS) domain"/>
    <property type="match status" value="1"/>
</dbReference>
<dbReference type="HAMAP" id="MF_00120">
    <property type="entry name" value="GatA"/>
    <property type="match status" value="1"/>
</dbReference>
<dbReference type="InterPro" id="IPR000120">
    <property type="entry name" value="Amidase"/>
</dbReference>
<dbReference type="InterPro" id="IPR020556">
    <property type="entry name" value="Amidase_CS"/>
</dbReference>
<dbReference type="InterPro" id="IPR023631">
    <property type="entry name" value="Amidase_dom"/>
</dbReference>
<dbReference type="InterPro" id="IPR036928">
    <property type="entry name" value="AS_sf"/>
</dbReference>
<dbReference type="InterPro" id="IPR004412">
    <property type="entry name" value="GatA"/>
</dbReference>
<dbReference type="NCBIfam" id="TIGR00132">
    <property type="entry name" value="gatA"/>
    <property type="match status" value="1"/>
</dbReference>
<dbReference type="PANTHER" id="PTHR11895:SF7">
    <property type="entry name" value="GLUTAMYL-TRNA(GLN) AMIDOTRANSFERASE SUBUNIT A, MITOCHONDRIAL"/>
    <property type="match status" value="1"/>
</dbReference>
<dbReference type="PANTHER" id="PTHR11895">
    <property type="entry name" value="TRANSAMIDASE"/>
    <property type="match status" value="1"/>
</dbReference>
<dbReference type="Pfam" id="PF01425">
    <property type="entry name" value="Amidase"/>
    <property type="match status" value="1"/>
</dbReference>
<dbReference type="SUPFAM" id="SSF75304">
    <property type="entry name" value="Amidase signature (AS) enzymes"/>
    <property type="match status" value="1"/>
</dbReference>
<dbReference type="PROSITE" id="PS00571">
    <property type="entry name" value="AMIDASES"/>
    <property type="match status" value="1"/>
</dbReference>
<organism>
    <name type="scientific">Eremothecium gossypii (strain ATCC 10895 / CBS 109.51 / FGSC 9923 / NRRL Y-1056)</name>
    <name type="common">Yeast</name>
    <name type="synonym">Ashbya gossypii</name>
    <dbReference type="NCBI Taxonomy" id="284811"/>
    <lineage>
        <taxon>Eukaryota</taxon>
        <taxon>Fungi</taxon>
        <taxon>Dikarya</taxon>
        <taxon>Ascomycota</taxon>
        <taxon>Saccharomycotina</taxon>
        <taxon>Saccharomycetes</taxon>
        <taxon>Saccharomycetales</taxon>
        <taxon>Saccharomycetaceae</taxon>
        <taxon>Eremothecium</taxon>
    </lineage>
</organism>
<accession>Q75D84</accession>
<sequence length="463" mass="49718">MKRALERLRQLPRANERFNIFNSVNLSAAQQVMPSEKPLGNLVVGIKDNIVTKKLPTTCSSGVLAGYMSPYDATVVELLDEAGAVTAGKTNMDEFGMGSGGIHSFFGPTLNPAFPERPTVAGGSSSGSAAAVAAGVVDFALGTDTGGSVRMPAAYTSTVGFKPSYGRVSRHGVIAYAQSLDTVGIGARDVGLVRRVFEVLDRHDPKDPTSLPDELRQQAAALRREKKHLKIGIPAELLHGSVAAEIRERLLVVLDKLQAQGHELYPVSVPAVKNSLLVYYMLAPAEAASNLARYDGIRYGCRDEDLDMSDEVLFAPTRGKFGKEVKNRIVLGNYNLCSGAFKNNYMKAQKLRVELINQFDSIFAFENICTGNKPNPAGVDVLLSLTCMAPPPSLEAFTSKENKSPVNSYINDVFTVPMSLAGLPCISVPLAGMKGVGIQLTAQFADDYGLLDAAEDVMQEQLN</sequence>
<keyword id="KW-0067">ATP-binding</keyword>
<keyword id="KW-0436">Ligase</keyword>
<keyword id="KW-0496">Mitochondrion</keyword>
<keyword id="KW-0547">Nucleotide-binding</keyword>
<keyword id="KW-0648">Protein biosynthesis</keyword>
<keyword id="KW-1185">Reference proteome</keyword>
<gene>
    <name evidence="1" type="primary">HER2</name>
    <name type="ordered locus">ABR140C</name>
</gene>
<evidence type="ECO:0000255" key="1">
    <source>
        <dbReference type="HAMAP-Rule" id="MF_03150"/>
    </source>
</evidence>
<comment type="function">
    <text evidence="1">Allows the formation of correctly charged Gln-tRNA(Gln) through the transamidation of misacylated Glu-tRNA(Gln) in the mitochondria. The reaction takes place in the presence of glutamine and ATP through an activated gamma-phospho-Glu-tRNA(Gln).</text>
</comment>
<comment type="catalytic activity">
    <reaction evidence="1">
        <text>L-glutamyl-tRNA(Gln) + L-glutamine + ATP + H2O = L-glutaminyl-tRNA(Gln) + L-glutamate + ADP + phosphate + H(+)</text>
        <dbReference type="Rhea" id="RHEA:17521"/>
        <dbReference type="Rhea" id="RHEA-COMP:9681"/>
        <dbReference type="Rhea" id="RHEA-COMP:9684"/>
        <dbReference type="ChEBI" id="CHEBI:15377"/>
        <dbReference type="ChEBI" id="CHEBI:15378"/>
        <dbReference type="ChEBI" id="CHEBI:29985"/>
        <dbReference type="ChEBI" id="CHEBI:30616"/>
        <dbReference type="ChEBI" id="CHEBI:43474"/>
        <dbReference type="ChEBI" id="CHEBI:58359"/>
        <dbReference type="ChEBI" id="CHEBI:78520"/>
        <dbReference type="ChEBI" id="CHEBI:78521"/>
        <dbReference type="ChEBI" id="CHEBI:456216"/>
        <dbReference type="EC" id="6.3.5.7"/>
    </reaction>
</comment>
<comment type="subunit">
    <text evidence="1">Subunit of the heterotrimeric GatFAB amidotransferase (AdT) complex, composed of A, B and F subunits.</text>
</comment>
<comment type="subcellular location">
    <subcellularLocation>
        <location evidence="1">Mitochondrion</location>
    </subcellularLocation>
</comment>
<comment type="similarity">
    <text evidence="1">Belongs to the amidase family. GatA subfamily.</text>
</comment>
<feature type="chain" id="PRO_0000413347" description="Glutamyl-tRNA(Gln) amidotransferase subunit A, mitochondrial">
    <location>
        <begin position="1"/>
        <end position="463"/>
    </location>
</feature>
<feature type="active site" description="Charge relay system" evidence="1">
    <location>
        <position position="47"/>
    </location>
</feature>
<feature type="active site" description="Charge relay system" evidence="1">
    <location>
        <position position="124"/>
    </location>
</feature>
<feature type="active site" description="Acyl-ester intermediate" evidence="1">
    <location>
        <position position="148"/>
    </location>
</feature>
<proteinExistence type="inferred from homology"/>
<name>GATA_EREGS</name>
<reference key="1">
    <citation type="journal article" date="2004" name="Science">
        <title>The Ashbya gossypii genome as a tool for mapping the ancient Saccharomyces cerevisiae genome.</title>
        <authorList>
            <person name="Dietrich F.S."/>
            <person name="Voegeli S."/>
            <person name="Brachat S."/>
            <person name="Lerch A."/>
            <person name="Gates K."/>
            <person name="Steiner S."/>
            <person name="Mohr C."/>
            <person name="Poehlmann R."/>
            <person name="Luedi P."/>
            <person name="Choi S."/>
            <person name="Wing R.A."/>
            <person name="Flavier A."/>
            <person name="Gaffney T.D."/>
            <person name="Philippsen P."/>
        </authorList>
    </citation>
    <scope>NUCLEOTIDE SEQUENCE [LARGE SCALE GENOMIC DNA]</scope>
    <source>
        <strain>ATCC 10895 / CBS 109.51 / FGSC 9923 / NRRL Y-1056</strain>
    </source>
</reference>
<reference key="2">
    <citation type="journal article" date="2013" name="G3 (Bethesda)">
        <title>Genomes of Ashbya fungi isolated from insects reveal four mating-type loci, numerous translocations, lack of transposons, and distinct gene duplications.</title>
        <authorList>
            <person name="Dietrich F.S."/>
            <person name="Voegeli S."/>
            <person name="Kuo S."/>
            <person name="Philippsen P."/>
        </authorList>
    </citation>
    <scope>GENOME REANNOTATION</scope>
    <source>
        <strain>ATCC 10895 / CBS 109.51 / FGSC 9923 / NRRL Y-1056</strain>
    </source>
</reference>
<protein>
    <recommendedName>
        <fullName evidence="1">Glutamyl-tRNA(Gln) amidotransferase subunit A, mitochondrial</fullName>
        <shortName evidence="1">Glu-AdT subunit A</shortName>
        <ecNumber evidence="1">6.3.5.7</ecNumber>
    </recommendedName>
</protein>